<accession>Q57AD9</accession>
<proteinExistence type="inferred from homology"/>
<sequence length="804" mass="85838">MKFTLSWLKDHLETDATLDEIVEKLTDIGLEVESVDDRAAFRAFTIARVLTATRHPDADKLQVLSVDTGDGKPVQVVCGAPNARAGLVGVLGRPGDYVPGLDVTLSVGKIRGVESFGMMCSERELELSDEHNGIIDLAENAPVGTSFAAYMGLDDPIIEIGLTPNRADCTGIRGIARDLAAAGLGTLKNTLPDAVKGEGETPVKVILDQDAGNPFCTGFALRMVKGVKNGPSPKWMQQRLKAIGLRPINALVDITNYVTFDQGRPLHVFDAAKVKGNLTVRTARDGETILALDQREYKLNAGMYVIADENGPESIAGIMGGEHSGCDENTVDVLIESALWDPRMIASTGRELGIVTDARYRFERGVDPEMMVPGAEIATKLVLELCGGQPTVLDVVGYKPHTARVIDFPVTEVKRLTGLDVSYEDAFDILKRLGFGVEGDGKTIRATVPSWRGDVEGKADLVEEVMRIHGINRIDPQPLPSHGAVNGRILTTLQIRTRHARRMLASRGMMEAVTYSFISEAQAKAFGGGKPELKLANPIAADMSDMRPSLLPGLLAAAQRNADRGFDDIALFEVSGIYEGDTPDKQRRVAGGVRRGTAKVEGAGRFWAGNAAPVGVFDAKADALAALEAAGAPVDRIQIEAGGPEWLHPGRSGTLKLGPKVVLGTFGEFHPDTLEALDVSGALCGFEVYLDAIPEPKAKSARTKPALSLSLFQSLKRDYAFVVDAAVEAGNVVKAVSSADKKLIVGVQVFDIFTGASLGEGKKSIAVEVLLQPQDRTLTDEDLEALSKQIVASVAKQTGGVLRG</sequence>
<comment type="catalytic activity">
    <reaction evidence="1">
        <text>tRNA(Phe) + L-phenylalanine + ATP = L-phenylalanyl-tRNA(Phe) + AMP + diphosphate + H(+)</text>
        <dbReference type="Rhea" id="RHEA:19413"/>
        <dbReference type="Rhea" id="RHEA-COMP:9668"/>
        <dbReference type="Rhea" id="RHEA-COMP:9699"/>
        <dbReference type="ChEBI" id="CHEBI:15378"/>
        <dbReference type="ChEBI" id="CHEBI:30616"/>
        <dbReference type="ChEBI" id="CHEBI:33019"/>
        <dbReference type="ChEBI" id="CHEBI:58095"/>
        <dbReference type="ChEBI" id="CHEBI:78442"/>
        <dbReference type="ChEBI" id="CHEBI:78531"/>
        <dbReference type="ChEBI" id="CHEBI:456215"/>
        <dbReference type="EC" id="6.1.1.20"/>
    </reaction>
</comment>
<comment type="cofactor">
    <cofactor evidence="1">
        <name>Mg(2+)</name>
        <dbReference type="ChEBI" id="CHEBI:18420"/>
    </cofactor>
    <text evidence="1">Binds 2 magnesium ions per tetramer.</text>
</comment>
<comment type="subunit">
    <text evidence="1">Tetramer of two alpha and two beta subunits.</text>
</comment>
<comment type="subcellular location">
    <subcellularLocation>
        <location evidence="1">Cytoplasm</location>
    </subcellularLocation>
</comment>
<comment type="similarity">
    <text evidence="1">Belongs to the phenylalanyl-tRNA synthetase beta subunit family. Type 1 subfamily.</text>
</comment>
<feature type="chain" id="PRO_0000232047" description="Phenylalanine--tRNA ligase beta subunit">
    <location>
        <begin position="1"/>
        <end position="804"/>
    </location>
</feature>
<feature type="domain" description="tRNA-binding" evidence="1">
    <location>
        <begin position="38"/>
        <end position="148"/>
    </location>
</feature>
<feature type="domain" description="B5" evidence="1">
    <location>
        <begin position="401"/>
        <end position="476"/>
    </location>
</feature>
<feature type="domain" description="FDX-ACB" evidence="1">
    <location>
        <begin position="710"/>
        <end position="803"/>
    </location>
</feature>
<feature type="binding site" evidence="1">
    <location>
        <position position="454"/>
    </location>
    <ligand>
        <name>Mg(2+)</name>
        <dbReference type="ChEBI" id="CHEBI:18420"/>
        <note>shared with alpha subunit</note>
    </ligand>
</feature>
<feature type="binding site" evidence="1">
    <location>
        <position position="460"/>
    </location>
    <ligand>
        <name>Mg(2+)</name>
        <dbReference type="ChEBI" id="CHEBI:18420"/>
        <note>shared with alpha subunit</note>
    </ligand>
</feature>
<feature type="binding site" evidence="1">
    <location>
        <position position="463"/>
    </location>
    <ligand>
        <name>Mg(2+)</name>
        <dbReference type="ChEBI" id="CHEBI:18420"/>
        <note>shared with alpha subunit</note>
    </ligand>
</feature>
<feature type="binding site" evidence="1">
    <location>
        <position position="464"/>
    </location>
    <ligand>
        <name>Mg(2+)</name>
        <dbReference type="ChEBI" id="CHEBI:18420"/>
        <note>shared with alpha subunit</note>
    </ligand>
</feature>
<keyword id="KW-0030">Aminoacyl-tRNA synthetase</keyword>
<keyword id="KW-0067">ATP-binding</keyword>
<keyword id="KW-0963">Cytoplasm</keyword>
<keyword id="KW-0436">Ligase</keyword>
<keyword id="KW-0460">Magnesium</keyword>
<keyword id="KW-0479">Metal-binding</keyword>
<keyword id="KW-0547">Nucleotide-binding</keyword>
<keyword id="KW-0648">Protein biosynthesis</keyword>
<keyword id="KW-0694">RNA-binding</keyword>
<keyword id="KW-0820">tRNA-binding</keyword>
<dbReference type="EC" id="6.1.1.20" evidence="1"/>
<dbReference type="EMBL" id="AE017223">
    <property type="protein sequence ID" value="AAX75395.1"/>
    <property type="molecule type" value="Genomic_DNA"/>
</dbReference>
<dbReference type="RefSeq" id="WP_002965188.1">
    <property type="nucleotide sequence ID" value="NC_006932.1"/>
</dbReference>
<dbReference type="SMR" id="Q57AD9"/>
<dbReference type="EnsemblBacteria" id="AAX75395">
    <property type="protein sequence ID" value="AAX75395"/>
    <property type="gene ID" value="BruAb1_2098"/>
</dbReference>
<dbReference type="GeneID" id="93017570"/>
<dbReference type="KEGG" id="bmb:BruAb1_2098"/>
<dbReference type="HOGENOM" id="CLU_016891_0_0_5"/>
<dbReference type="Proteomes" id="UP000000540">
    <property type="component" value="Chromosome I"/>
</dbReference>
<dbReference type="GO" id="GO:0009328">
    <property type="term" value="C:phenylalanine-tRNA ligase complex"/>
    <property type="evidence" value="ECO:0007669"/>
    <property type="project" value="TreeGrafter"/>
</dbReference>
<dbReference type="GO" id="GO:0005524">
    <property type="term" value="F:ATP binding"/>
    <property type="evidence" value="ECO:0007669"/>
    <property type="project" value="UniProtKB-UniRule"/>
</dbReference>
<dbReference type="GO" id="GO:0000287">
    <property type="term" value="F:magnesium ion binding"/>
    <property type="evidence" value="ECO:0007669"/>
    <property type="project" value="UniProtKB-UniRule"/>
</dbReference>
<dbReference type="GO" id="GO:0004826">
    <property type="term" value="F:phenylalanine-tRNA ligase activity"/>
    <property type="evidence" value="ECO:0007669"/>
    <property type="project" value="UniProtKB-UniRule"/>
</dbReference>
<dbReference type="GO" id="GO:0000049">
    <property type="term" value="F:tRNA binding"/>
    <property type="evidence" value="ECO:0007669"/>
    <property type="project" value="UniProtKB-KW"/>
</dbReference>
<dbReference type="GO" id="GO:0006432">
    <property type="term" value="P:phenylalanyl-tRNA aminoacylation"/>
    <property type="evidence" value="ECO:0007669"/>
    <property type="project" value="UniProtKB-UniRule"/>
</dbReference>
<dbReference type="CDD" id="cd00769">
    <property type="entry name" value="PheRS_beta_core"/>
    <property type="match status" value="1"/>
</dbReference>
<dbReference type="CDD" id="cd02796">
    <property type="entry name" value="tRNA_bind_bactPheRS"/>
    <property type="match status" value="1"/>
</dbReference>
<dbReference type="FunFam" id="2.40.50.140:FF:000045">
    <property type="entry name" value="Phenylalanine--tRNA ligase beta subunit"/>
    <property type="match status" value="1"/>
</dbReference>
<dbReference type="FunFam" id="3.30.70.380:FF:000001">
    <property type="entry name" value="Phenylalanine--tRNA ligase beta subunit"/>
    <property type="match status" value="1"/>
</dbReference>
<dbReference type="Gene3D" id="3.30.56.10">
    <property type="match status" value="2"/>
</dbReference>
<dbReference type="Gene3D" id="3.30.930.10">
    <property type="entry name" value="Bira Bifunctional Protein, Domain 2"/>
    <property type="match status" value="1"/>
</dbReference>
<dbReference type="Gene3D" id="3.30.70.380">
    <property type="entry name" value="Ferrodoxin-fold anticodon-binding domain"/>
    <property type="match status" value="1"/>
</dbReference>
<dbReference type="Gene3D" id="2.40.50.140">
    <property type="entry name" value="Nucleic acid-binding proteins"/>
    <property type="match status" value="1"/>
</dbReference>
<dbReference type="Gene3D" id="3.50.40.10">
    <property type="entry name" value="Phenylalanyl-trna Synthetase, Chain B, domain 3"/>
    <property type="match status" value="1"/>
</dbReference>
<dbReference type="HAMAP" id="MF_00283">
    <property type="entry name" value="Phe_tRNA_synth_beta1"/>
    <property type="match status" value="1"/>
</dbReference>
<dbReference type="InterPro" id="IPR045864">
    <property type="entry name" value="aa-tRNA-synth_II/BPL/LPL"/>
</dbReference>
<dbReference type="InterPro" id="IPR005146">
    <property type="entry name" value="B3/B4_tRNA-bd"/>
</dbReference>
<dbReference type="InterPro" id="IPR009061">
    <property type="entry name" value="DNA-bd_dom_put_sf"/>
</dbReference>
<dbReference type="InterPro" id="IPR005121">
    <property type="entry name" value="Fdx_antiC-bd"/>
</dbReference>
<dbReference type="InterPro" id="IPR036690">
    <property type="entry name" value="Fdx_antiC-bd_sf"/>
</dbReference>
<dbReference type="InterPro" id="IPR012340">
    <property type="entry name" value="NA-bd_OB-fold"/>
</dbReference>
<dbReference type="InterPro" id="IPR045060">
    <property type="entry name" value="Phe-tRNA-ligase_IIc_bsu"/>
</dbReference>
<dbReference type="InterPro" id="IPR004532">
    <property type="entry name" value="Phe-tRNA-ligase_IIc_bsu_bact"/>
</dbReference>
<dbReference type="InterPro" id="IPR020825">
    <property type="entry name" value="Phe-tRNA_synthase-like_B3/B4"/>
</dbReference>
<dbReference type="InterPro" id="IPR041616">
    <property type="entry name" value="PheRS_beta_core"/>
</dbReference>
<dbReference type="InterPro" id="IPR002547">
    <property type="entry name" value="tRNA-bd_dom"/>
</dbReference>
<dbReference type="InterPro" id="IPR033714">
    <property type="entry name" value="tRNA_bind_bactPheRS"/>
</dbReference>
<dbReference type="InterPro" id="IPR005147">
    <property type="entry name" value="tRNA_synthase_B5-dom"/>
</dbReference>
<dbReference type="NCBIfam" id="TIGR00472">
    <property type="entry name" value="pheT_bact"/>
    <property type="match status" value="1"/>
</dbReference>
<dbReference type="NCBIfam" id="NF045760">
    <property type="entry name" value="YtpR"/>
    <property type="match status" value="1"/>
</dbReference>
<dbReference type="PANTHER" id="PTHR10947:SF0">
    <property type="entry name" value="PHENYLALANINE--TRNA LIGASE BETA SUBUNIT"/>
    <property type="match status" value="1"/>
</dbReference>
<dbReference type="PANTHER" id="PTHR10947">
    <property type="entry name" value="PHENYLALANYL-TRNA SYNTHETASE BETA CHAIN AND LEUCINE-RICH REPEAT-CONTAINING PROTEIN 47"/>
    <property type="match status" value="1"/>
</dbReference>
<dbReference type="Pfam" id="PF03483">
    <property type="entry name" value="B3_4"/>
    <property type="match status" value="1"/>
</dbReference>
<dbReference type="Pfam" id="PF03484">
    <property type="entry name" value="B5"/>
    <property type="match status" value="1"/>
</dbReference>
<dbReference type="Pfam" id="PF03147">
    <property type="entry name" value="FDX-ACB"/>
    <property type="match status" value="1"/>
</dbReference>
<dbReference type="Pfam" id="PF01588">
    <property type="entry name" value="tRNA_bind"/>
    <property type="match status" value="1"/>
</dbReference>
<dbReference type="Pfam" id="PF17759">
    <property type="entry name" value="tRNA_synthFbeta"/>
    <property type="match status" value="1"/>
</dbReference>
<dbReference type="SMART" id="SM00873">
    <property type="entry name" value="B3_4"/>
    <property type="match status" value="1"/>
</dbReference>
<dbReference type="SMART" id="SM00874">
    <property type="entry name" value="B5"/>
    <property type="match status" value="1"/>
</dbReference>
<dbReference type="SMART" id="SM00896">
    <property type="entry name" value="FDX-ACB"/>
    <property type="match status" value="1"/>
</dbReference>
<dbReference type="SUPFAM" id="SSF54991">
    <property type="entry name" value="Anticodon-binding domain of PheRS"/>
    <property type="match status" value="1"/>
</dbReference>
<dbReference type="SUPFAM" id="SSF55681">
    <property type="entry name" value="Class II aaRS and biotin synthetases"/>
    <property type="match status" value="1"/>
</dbReference>
<dbReference type="SUPFAM" id="SSF50249">
    <property type="entry name" value="Nucleic acid-binding proteins"/>
    <property type="match status" value="1"/>
</dbReference>
<dbReference type="SUPFAM" id="SSF56037">
    <property type="entry name" value="PheT/TilS domain"/>
    <property type="match status" value="1"/>
</dbReference>
<dbReference type="SUPFAM" id="SSF46955">
    <property type="entry name" value="Putative DNA-binding domain"/>
    <property type="match status" value="1"/>
</dbReference>
<dbReference type="PROSITE" id="PS51483">
    <property type="entry name" value="B5"/>
    <property type="match status" value="1"/>
</dbReference>
<dbReference type="PROSITE" id="PS51447">
    <property type="entry name" value="FDX_ACB"/>
    <property type="match status" value="1"/>
</dbReference>
<dbReference type="PROSITE" id="PS50886">
    <property type="entry name" value="TRBD"/>
    <property type="match status" value="1"/>
</dbReference>
<protein>
    <recommendedName>
        <fullName evidence="1">Phenylalanine--tRNA ligase beta subunit</fullName>
        <ecNumber evidence="1">6.1.1.20</ecNumber>
    </recommendedName>
    <alternativeName>
        <fullName evidence="1">Phenylalanyl-tRNA synthetase beta subunit</fullName>
        <shortName evidence="1">PheRS</shortName>
    </alternativeName>
</protein>
<evidence type="ECO:0000255" key="1">
    <source>
        <dbReference type="HAMAP-Rule" id="MF_00283"/>
    </source>
</evidence>
<name>SYFB_BRUAB</name>
<gene>
    <name evidence="1" type="primary">pheT</name>
    <name type="ordered locus">BruAb1_2098</name>
</gene>
<reference key="1">
    <citation type="journal article" date="2005" name="J. Bacteriol.">
        <title>Completion of the genome sequence of Brucella abortus and comparison to the highly similar genomes of Brucella melitensis and Brucella suis.</title>
        <authorList>
            <person name="Halling S.M."/>
            <person name="Peterson-Burch B.D."/>
            <person name="Bricker B.J."/>
            <person name="Zuerner R.L."/>
            <person name="Qing Z."/>
            <person name="Li L.-L."/>
            <person name="Kapur V."/>
            <person name="Alt D.P."/>
            <person name="Olsen S.C."/>
        </authorList>
    </citation>
    <scope>NUCLEOTIDE SEQUENCE [LARGE SCALE GENOMIC DNA]</scope>
    <source>
        <strain>9-941</strain>
    </source>
</reference>
<organism>
    <name type="scientific">Brucella abortus biovar 1 (strain 9-941)</name>
    <dbReference type="NCBI Taxonomy" id="262698"/>
    <lineage>
        <taxon>Bacteria</taxon>
        <taxon>Pseudomonadati</taxon>
        <taxon>Pseudomonadota</taxon>
        <taxon>Alphaproteobacteria</taxon>
        <taxon>Hyphomicrobiales</taxon>
        <taxon>Brucellaceae</taxon>
        <taxon>Brucella/Ochrobactrum group</taxon>
        <taxon>Brucella</taxon>
    </lineage>
</organism>